<feature type="chain" id="PRO_1000124588" description="Thiazole synthase">
    <location>
        <begin position="1"/>
        <end position="261"/>
    </location>
</feature>
<feature type="active site" description="Schiff-base intermediate with DXP" evidence="1">
    <location>
        <position position="102"/>
    </location>
</feature>
<feature type="binding site" evidence="1">
    <location>
        <position position="163"/>
    </location>
    <ligand>
        <name>1-deoxy-D-xylulose 5-phosphate</name>
        <dbReference type="ChEBI" id="CHEBI:57792"/>
    </ligand>
</feature>
<feature type="binding site" evidence="1">
    <location>
        <begin position="189"/>
        <end position="190"/>
    </location>
    <ligand>
        <name>1-deoxy-D-xylulose 5-phosphate</name>
        <dbReference type="ChEBI" id="CHEBI:57792"/>
    </ligand>
</feature>
<feature type="binding site" evidence="1">
    <location>
        <begin position="211"/>
        <end position="212"/>
    </location>
    <ligand>
        <name>1-deoxy-D-xylulose 5-phosphate</name>
        <dbReference type="ChEBI" id="CHEBI:57792"/>
    </ligand>
</feature>
<proteinExistence type="inferred from homology"/>
<comment type="function">
    <text evidence="1">Catalyzes the rearrangement of 1-deoxy-D-xylulose 5-phosphate (DXP) to produce the thiazole phosphate moiety of thiamine. Sulfur is provided by the thiocarboxylate moiety of the carrier protein ThiS. In vitro, sulfur can be provided by H(2)S.</text>
</comment>
<comment type="catalytic activity">
    <reaction evidence="1">
        <text>[ThiS sulfur-carrier protein]-C-terminal-Gly-aminoethanethioate + 2-iminoacetate + 1-deoxy-D-xylulose 5-phosphate = [ThiS sulfur-carrier protein]-C-terminal Gly-Gly + 2-[(2R,5Z)-2-carboxy-4-methylthiazol-5(2H)-ylidene]ethyl phosphate + 2 H2O + H(+)</text>
        <dbReference type="Rhea" id="RHEA:26297"/>
        <dbReference type="Rhea" id="RHEA-COMP:12909"/>
        <dbReference type="Rhea" id="RHEA-COMP:19908"/>
        <dbReference type="ChEBI" id="CHEBI:15377"/>
        <dbReference type="ChEBI" id="CHEBI:15378"/>
        <dbReference type="ChEBI" id="CHEBI:57792"/>
        <dbReference type="ChEBI" id="CHEBI:62899"/>
        <dbReference type="ChEBI" id="CHEBI:77846"/>
        <dbReference type="ChEBI" id="CHEBI:90778"/>
        <dbReference type="ChEBI" id="CHEBI:232372"/>
        <dbReference type="EC" id="2.8.1.10"/>
    </reaction>
</comment>
<comment type="pathway">
    <text evidence="1">Cofactor biosynthesis; thiamine diphosphate biosynthesis.</text>
</comment>
<comment type="subunit">
    <text evidence="1">Homotetramer. Forms heterodimers with either ThiH or ThiS.</text>
</comment>
<comment type="subcellular location">
    <subcellularLocation>
        <location evidence="1">Cytoplasm</location>
    </subcellularLocation>
</comment>
<comment type="similarity">
    <text evidence="1">Belongs to the ThiG family.</text>
</comment>
<accession>B7GZV4</accession>
<evidence type="ECO:0000255" key="1">
    <source>
        <dbReference type="HAMAP-Rule" id="MF_00443"/>
    </source>
</evidence>
<sequence length="261" mass="27763">MQDTPLIIGSRSFQSRLLVGTGKYKDLNETDLAIQASGAEIVTVAIRRVNIGQNPDQPNLLSVIPPEKYTILPNTAGCFDADSAVRTCMLARELLDGHNLVKLEVLGDEKTLYPNVTETLKAARTLIDDGFEIMVYTSDDPIIAQELESMGCVAIMPLGSLIGSGLGILNPHTISIIKENAKVPVLVDAGVGTASDAAIAMELGCDGVLMNTAIAAAQNPILMASAMKKAVEAGREAFLAGRMPRKRMANASSPETGYFFK</sequence>
<keyword id="KW-0963">Cytoplasm</keyword>
<keyword id="KW-0704">Schiff base</keyword>
<keyword id="KW-0784">Thiamine biosynthesis</keyword>
<keyword id="KW-0808">Transferase</keyword>
<gene>
    <name evidence="1" type="primary">thiG</name>
    <name type="ordered locus">ABBFA_001174</name>
</gene>
<organism>
    <name type="scientific">Acinetobacter baumannii (strain AB307-0294)</name>
    <dbReference type="NCBI Taxonomy" id="557600"/>
    <lineage>
        <taxon>Bacteria</taxon>
        <taxon>Pseudomonadati</taxon>
        <taxon>Pseudomonadota</taxon>
        <taxon>Gammaproteobacteria</taxon>
        <taxon>Moraxellales</taxon>
        <taxon>Moraxellaceae</taxon>
        <taxon>Acinetobacter</taxon>
        <taxon>Acinetobacter calcoaceticus/baumannii complex</taxon>
    </lineage>
</organism>
<reference key="1">
    <citation type="journal article" date="2008" name="J. Bacteriol.">
        <title>Comparative genome sequence analysis of multidrug-resistant Acinetobacter baumannii.</title>
        <authorList>
            <person name="Adams M.D."/>
            <person name="Goglin K."/>
            <person name="Molyneaux N."/>
            <person name="Hujer K.M."/>
            <person name="Lavender H."/>
            <person name="Jamison J.J."/>
            <person name="MacDonald I.J."/>
            <person name="Martin K.M."/>
            <person name="Russo T."/>
            <person name="Campagnari A.A."/>
            <person name="Hujer A.M."/>
            <person name="Bonomo R.A."/>
            <person name="Gill S.R."/>
        </authorList>
    </citation>
    <scope>NUCLEOTIDE SEQUENCE [LARGE SCALE GENOMIC DNA]</scope>
    <source>
        <strain>AB307-0294</strain>
    </source>
</reference>
<protein>
    <recommendedName>
        <fullName evidence="1">Thiazole synthase</fullName>
        <ecNumber evidence="1">2.8.1.10</ecNumber>
    </recommendedName>
</protein>
<dbReference type="EC" id="2.8.1.10" evidence="1"/>
<dbReference type="EMBL" id="CP001172">
    <property type="protein sequence ID" value="ACJ58594.1"/>
    <property type="molecule type" value="Genomic_DNA"/>
</dbReference>
<dbReference type="RefSeq" id="WP_001154366.1">
    <property type="nucleotide sequence ID" value="NZ_CP001172.1"/>
</dbReference>
<dbReference type="SMR" id="B7GZV4"/>
<dbReference type="HOGENOM" id="CLU_062233_1_1_6"/>
<dbReference type="UniPathway" id="UPA00060"/>
<dbReference type="Proteomes" id="UP000006924">
    <property type="component" value="Chromosome"/>
</dbReference>
<dbReference type="GO" id="GO:0005737">
    <property type="term" value="C:cytoplasm"/>
    <property type="evidence" value="ECO:0007669"/>
    <property type="project" value="UniProtKB-SubCell"/>
</dbReference>
<dbReference type="GO" id="GO:1990107">
    <property type="term" value="F:thiazole synthase activity"/>
    <property type="evidence" value="ECO:0007669"/>
    <property type="project" value="UniProtKB-EC"/>
</dbReference>
<dbReference type="GO" id="GO:0009229">
    <property type="term" value="P:thiamine diphosphate biosynthetic process"/>
    <property type="evidence" value="ECO:0007669"/>
    <property type="project" value="UniProtKB-UniRule"/>
</dbReference>
<dbReference type="CDD" id="cd04728">
    <property type="entry name" value="ThiG"/>
    <property type="match status" value="1"/>
</dbReference>
<dbReference type="Gene3D" id="3.20.20.70">
    <property type="entry name" value="Aldolase class I"/>
    <property type="match status" value="1"/>
</dbReference>
<dbReference type="HAMAP" id="MF_00443">
    <property type="entry name" value="ThiG"/>
    <property type="match status" value="1"/>
</dbReference>
<dbReference type="InterPro" id="IPR013785">
    <property type="entry name" value="Aldolase_TIM"/>
</dbReference>
<dbReference type="InterPro" id="IPR033983">
    <property type="entry name" value="Thiazole_synthase_ThiG"/>
</dbReference>
<dbReference type="InterPro" id="IPR008867">
    <property type="entry name" value="ThiG"/>
</dbReference>
<dbReference type="PANTHER" id="PTHR34266">
    <property type="entry name" value="THIAZOLE SYNTHASE"/>
    <property type="match status" value="1"/>
</dbReference>
<dbReference type="PANTHER" id="PTHR34266:SF2">
    <property type="entry name" value="THIAZOLE SYNTHASE"/>
    <property type="match status" value="1"/>
</dbReference>
<dbReference type="Pfam" id="PF05690">
    <property type="entry name" value="ThiG"/>
    <property type="match status" value="1"/>
</dbReference>
<dbReference type="SUPFAM" id="SSF110399">
    <property type="entry name" value="ThiG-like"/>
    <property type="match status" value="1"/>
</dbReference>
<name>THIG_ACIB3</name>